<organism>
    <name type="scientific">Pyrococcus abyssi (strain GE5 / Orsay)</name>
    <dbReference type="NCBI Taxonomy" id="272844"/>
    <lineage>
        <taxon>Archaea</taxon>
        <taxon>Methanobacteriati</taxon>
        <taxon>Methanobacteriota</taxon>
        <taxon>Thermococci</taxon>
        <taxon>Thermococcales</taxon>
        <taxon>Thermococcaceae</taxon>
        <taxon>Pyrococcus</taxon>
    </lineage>
</organism>
<feature type="chain" id="PRO_0000154999" description="Archaeal histone B">
    <location>
        <begin position="1"/>
        <end position="67"/>
    </location>
</feature>
<feature type="region of interest" description="Interaction with DNA" evidence="1">
    <location>
        <begin position="20"/>
        <end position="22"/>
    </location>
</feature>
<feature type="region of interest" description="Interaction with DNA" evidence="1">
    <location>
        <begin position="54"/>
        <end position="57"/>
    </location>
</feature>
<proteinExistence type="inferred from homology"/>
<accession>Q9V1F5</accession>
<accession>G8ZGH6</accession>
<gene>
    <name type="ordered locus">PYRAB04720</name>
    <name type="ORF">PAB3117</name>
</gene>
<name>HARB_PYRAB</name>
<reference key="1">
    <citation type="journal article" date="2003" name="Mol. Microbiol.">
        <title>An integrated analysis of the genome of the hyperthermophilic archaeon Pyrococcus abyssi.</title>
        <authorList>
            <person name="Cohen G.N."/>
            <person name="Barbe V."/>
            <person name="Flament D."/>
            <person name="Galperin M."/>
            <person name="Heilig R."/>
            <person name="Lecompte O."/>
            <person name="Poch O."/>
            <person name="Prieur D."/>
            <person name="Querellou J."/>
            <person name="Ripp R."/>
            <person name="Thierry J.-C."/>
            <person name="Van der Oost J."/>
            <person name="Weissenbach J."/>
            <person name="Zivanovic Y."/>
            <person name="Forterre P."/>
        </authorList>
    </citation>
    <scope>NUCLEOTIDE SEQUENCE [LARGE SCALE GENOMIC DNA]</scope>
    <source>
        <strain>GE5 / Orsay</strain>
    </source>
</reference>
<reference key="2">
    <citation type="journal article" date="2012" name="Curr. Microbiol.">
        <title>Re-annotation of two hyperthermophilic archaea Pyrococcus abyssi GE5 and Pyrococcus furiosus DSM 3638.</title>
        <authorList>
            <person name="Gao J."/>
            <person name="Wang J."/>
        </authorList>
    </citation>
    <scope>GENOME REANNOTATION</scope>
    <source>
        <strain>GE5 / Orsay</strain>
    </source>
</reference>
<protein>
    <recommendedName>
        <fullName>Archaeal histone B</fullName>
    </recommendedName>
    <alternativeName>
        <fullName>Archaeal histone A2</fullName>
    </alternativeName>
</protein>
<sequence length="67" mass="7338">MAELPIAPVDRLIRKAGAQRVSEKAAKLLAEHLEEKALEIAKKAVDLAKHAGRKTVKVEDIKLAIRS</sequence>
<dbReference type="EMBL" id="AJ248284">
    <property type="protein sequence ID" value="CAB49394.1"/>
    <property type="molecule type" value="Genomic_DNA"/>
</dbReference>
<dbReference type="EMBL" id="HE613800">
    <property type="protein sequence ID" value="CCE69855.1"/>
    <property type="molecule type" value="Genomic_DNA"/>
</dbReference>
<dbReference type="PIR" id="C75164">
    <property type="entry name" value="C75164"/>
</dbReference>
<dbReference type="RefSeq" id="WP_010867596.1">
    <property type="nucleotide sequence ID" value="NC_000868.1"/>
</dbReference>
<dbReference type="SMR" id="Q9V1F5"/>
<dbReference type="STRING" id="272844.PAB3117"/>
<dbReference type="KEGG" id="pab:PAB3117"/>
<dbReference type="PATRIC" id="fig|272844.11.peg.499"/>
<dbReference type="eggNOG" id="arCOG02144">
    <property type="taxonomic scope" value="Archaea"/>
</dbReference>
<dbReference type="HOGENOM" id="CLU_192667_0_0_2"/>
<dbReference type="PhylomeDB" id="Q9V1F5"/>
<dbReference type="Proteomes" id="UP000000810">
    <property type="component" value="Chromosome"/>
</dbReference>
<dbReference type="Proteomes" id="UP000009139">
    <property type="component" value="Chromosome"/>
</dbReference>
<dbReference type="GO" id="GO:0005694">
    <property type="term" value="C:chromosome"/>
    <property type="evidence" value="ECO:0007669"/>
    <property type="project" value="UniProtKB-SubCell"/>
</dbReference>
<dbReference type="GO" id="GO:0005737">
    <property type="term" value="C:cytoplasm"/>
    <property type="evidence" value="ECO:0007669"/>
    <property type="project" value="UniProtKB-SubCell"/>
</dbReference>
<dbReference type="GO" id="GO:0003677">
    <property type="term" value="F:DNA binding"/>
    <property type="evidence" value="ECO:0007669"/>
    <property type="project" value="UniProtKB-KW"/>
</dbReference>
<dbReference type="GO" id="GO:0046982">
    <property type="term" value="F:protein heterodimerization activity"/>
    <property type="evidence" value="ECO:0007669"/>
    <property type="project" value="InterPro"/>
</dbReference>
<dbReference type="CDD" id="cd22909">
    <property type="entry name" value="HFD_archaea_histone-like"/>
    <property type="match status" value="1"/>
</dbReference>
<dbReference type="Gene3D" id="1.10.20.10">
    <property type="entry name" value="Histone, subunit A"/>
    <property type="match status" value="1"/>
</dbReference>
<dbReference type="InterPro" id="IPR050947">
    <property type="entry name" value="Archaeal_histone_HMF"/>
</dbReference>
<dbReference type="InterPro" id="IPR003958">
    <property type="entry name" value="CBFA_NFYB_domain"/>
</dbReference>
<dbReference type="InterPro" id="IPR009072">
    <property type="entry name" value="Histone-fold"/>
</dbReference>
<dbReference type="InterPro" id="IPR050004">
    <property type="entry name" value="HmfB-like"/>
</dbReference>
<dbReference type="NCBIfam" id="NF043032">
    <property type="entry name" value="archaea_histone"/>
    <property type="match status" value="1"/>
</dbReference>
<dbReference type="PANTHER" id="PTHR47828">
    <property type="entry name" value="ARCHAEAL HISTONE A"/>
    <property type="match status" value="1"/>
</dbReference>
<dbReference type="PANTHER" id="PTHR47828:SF1">
    <property type="entry name" value="ARCHAEAL HISTONE A"/>
    <property type="match status" value="1"/>
</dbReference>
<dbReference type="Pfam" id="PF00808">
    <property type="entry name" value="CBFD_NFYB_HMF"/>
    <property type="match status" value="1"/>
</dbReference>
<dbReference type="SUPFAM" id="SSF47113">
    <property type="entry name" value="Histone-fold"/>
    <property type="match status" value="1"/>
</dbReference>
<keyword id="KW-0158">Chromosome</keyword>
<keyword id="KW-0963">Cytoplasm</keyword>
<keyword id="KW-0238">DNA-binding</keyword>
<evidence type="ECO:0000250" key="1">
    <source>
        <dbReference type="UniProtKB" id="P19267"/>
    </source>
</evidence>
<evidence type="ECO:0000305" key="2"/>
<comment type="function">
    <text evidence="1">Binds and compact DNA (95 to 150 base pairs) to form nucleosome-like structures that contain positive DNA supercoils. Increases the resistance of DNA to thermal denaturation (in vitro).</text>
</comment>
<comment type="subunit">
    <text evidence="1">Homodimer or heterodimer with another histone. Dimers then assemble into higher oligomers, with the DNA wrapped around the protein core (By similarity).</text>
</comment>
<comment type="subcellular location">
    <subcellularLocation>
        <location evidence="2">Cytoplasm</location>
    </subcellularLocation>
    <subcellularLocation>
        <location evidence="2">Chromosome</location>
    </subcellularLocation>
</comment>
<comment type="similarity">
    <text evidence="2">Belongs to the archaeal histone HMF family.</text>
</comment>